<reference key="1">
    <citation type="submission" date="2005-08" db="EMBL/GenBank/DDBJ databases">
        <title>Complete sequence of Chlorobium chlorochromatii CaD3.</title>
        <authorList>
            <consortium name="US DOE Joint Genome Institute"/>
            <person name="Copeland A."/>
            <person name="Lucas S."/>
            <person name="Lapidus A."/>
            <person name="Barry K."/>
            <person name="Detter J.C."/>
            <person name="Glavina T."/>
            <person name="Hammon N."/>
            <person name="Israni S."/>
            <person name="Pitluck S."/>
            <person name="Bryant D."/>
            <person name="Schmutz J."/>
            <person name="Larimer F."/>
            <person name="Land M."/>
            <person name="Kyrpides N."/>
            <person name="Ivanova N."/>
            <person name="Richardson P."/>
        </authorList>
    </citation>
    <scope>NUCLEOTIDE SEQUENCE [LARGE SCALE GENOMIC DNA]</scope>
    <source>
        <strain>CaD3</strain>
    </source>
</reference>
<protein>
    <recommendedName>
        <fullName evidence="1">Translation initiation factor IF-1</fullName>
    </recommendedName>
</protein>
<sequence>MAKEESIEIEGVIVDALPNAQFKVKLENGLEVLAHVSGKIRMHYIRILPGDKVKVQISPYDITKGRITYRYK</sequence>
<comment type="function">
    <text evidence="1">One of the essential components for the initiation of protein synthesis. Stabilizes the binding of IF-2 and IF-3 on the 30S subunit to which N-formylmethionyl-tRNA(fMet) subsequently binds. Helps modulate mRNA selection, yielding the 30S pre-initiation complex (PIC). Upon addition of the 50S ribosomal subunit IF-1, IF-2 and IF-3 are released leaving the mature 70S translation initiation complex.</text>
</comment>
<comment type="subunit">
    <text evidence="1">Component of the 30S ribosomal translation pre-initiation complex which assembles on the 30S ribosome in the order IF-2 and IF-3, IF-1 and N-formylmethionyl-tRNA(fMet); mRNA recruitment can occur at any time during PIC assembly.</text>
</comment>
<comment type="subcellular location">
    <subcellularLocation>
        <location evidence="1">Cytoplasm</location>
    </subcellularLocation>
</comment>
<comment type="similarity">
    <text evidence="1">Belongs to the IF-1 family.</text>
</comment>
<accession>Q3APJ5</accession>
<name>IF1_CHLCH</name>
<feature type="chain" id="PRO_0000263783" description="Translation initiation factor IF-1">
    <location>
        <begin position="1"/>
        <end position="72"/>
    </location>
</feature>
<feature type="domain" description="S1-like" evidence="1">
    <location>
        <begin position="1"/>
        <end position="72"/>
    </location>
</feature>
<keyword id="KW-0963">Cytoplasm</keyword>
<keyword id="KW-0396">Initiation factor</keyword>
<keyword id="KW-0648">Protein biosynthesis</keyword>
<keyword id="KW-0694">RNA-binding</keyword>
<keyword id="KW-0699">rRNA-binding</keyword>
<dbReference type="EMBL" id="CP000108">
    <property type="protein sequence ID" value="ABB29080.1"/>
    <property type="molecule type" value="Genomic_DNA"/>
</dbReference>
<dbReference type="SMR" id="Q3APJ5"/>
<dbReference type="STRING" id="340177.Cag_1829"/>
<dbReference type="KEGG" id="cch:Cag_1829"/>
<dbReference type="eggNOG" id="COG0361">
    <property type="taxonomic scope" value="Bacteria"/>
</dbReference>
<dbReference type="HOGENOM" id="CLU_151267_1_0_10"/>
<dbReference type="OrthoDB" id="9803250at2"/>
<dbReference type="GO" id="GO:0005829">
    <property type="term" value="C:cytosol"/>
    <property type="evidence" value="ECO:0007669"/>
    <property type="project" value="TreeGrafter"/>
</dbReference>
<dbReference type="GO" id="GO:0043022">
    <property type="term" value="F:ribosome binding"/>
    <property type="evidence" value="ECO:0007669"/>
    <property type="project" value="UniProtKB-UniRule"/>
</dbReference>
<dbReference type="GO" id="GO:0019843">
    <property type="term" value="F:rRNA binding"/>
    <property type="evidence" value="ECO:0007669"/>
    <property type="project" value="UniProtKB-UniRule"/>
</dbReference>
<dbReference type="GO" id="GO:0003743">
    <property type="term" value="F:translation initiation factor activity"/>
    <property type="evidence" value="ECO:0007669"/>
    <property type="project" value="UniProtKB-UniRule"/>
</dbReference>
<dbReference type="CDD" id="cd04451">
    <property type="entry name" value="S1_IF1"/>
    <property type="match status" value="1"/>
</dbReference>
<dbReference type="FunFam" id="2.40.50.140:FF:000002">
    <property type="entry name" value="Translation initiation factor IF-1"/>
    <property type="match status" value="1"/>
</dbReference>
<dbReference type="Gene3D" id="2.40.50.140">
    <property type="entry name" value="Nucleic acid-binding proteins"/>
    <property type="match status" value="1"/>
</dbReference>
<dbReference type="HAMAP" id="MF_00075">
    <property type="entry name" value="IF_1"/>
    <property type="match status" value="1"/>
</dbReference>
<dbReference type="InterPro" id="IPR012340">
    <property type="entry name" value="NA-bd_OB-fold"/>
</dbReference>
<dbReference type="InterPro" id="IPR006196">
    <property type="entry name" value="RNA-binding_domain_S1_IF1"/>
</dbReference>
<dbReference type="InterPro" id="IPR003029">
    <property type="entry name" value="S1_domain"/>
</dbReference>
<dbReference type="InterPro" id="IPR004368">
    <property type="entry name" value="TIF_IF1"/>
</dbReference>
<dbReference type="NCBIfam" id="TIGR00008">
    <property type="entry name" value="infA"/>
    <property type="match status" value="1"/>
</dbReference>
<dbReference type="PANTHER" id="PTHR33370">
    <property type="entry name" value="TRANSLATION INITIATION FACTOR IF-1, CHLOROPLASTIC"/>
    <property type="match status" value="1"/>
</dbReference>
<dbReference type="PANTHER" id="PTHR33370:SF1">
    <property type="entry name" value="TRANSLATION INITIATION FACTOR IF-1, CHLOROPLASTIC"/>
    <property type="match status" value="1"/>
</dbReference>
<dbReference type="Pfam" id="PF01176">
    <property type="entry name" value="eIF-1a"/>
    <property type="match status" value="1"/>
</dbReference>
<dbReference type="SMART" id="SM00316">
    <property type="entry name" value="S1"/>
    <property type="match status" value="1"/>
</dbReference>
<dbReference type="SUPFAM" id="SSF50249">
    <property type="entry name" value="Nucleic acid-binding proteins"/>
    <property type="match status" value="1"/>
</dbReference>
<dbReference type="PROSITE" id="PS50832">
    <property type="entry name" value="S1_IF1_TYPE"/>
    <property type="match status" value="1"/>
</dbReference>
<evidence type="ECO:0000255" key="1">
    <source>
        <dbReference type="HAMAP-Rule" id="MF_00075"/>
    </source>
</evidence>
<gene>
    <name evidence="1" type="primary">infA</name>
    <name type="ordered locus">Cag_1829</name>
</gene>
<organism>
    <name type="scientific">Chlorobium chlorochromatii (strain CaD3)</name>
    <dbReference type="NCBI Taxonomy" id="340177"/>
    <lineage>
        <taxon>Bacteria</taxon>
        <taxon>Pseudomonadati</taxon>
        <taxon>Chlorobiota</taxon>
        <taxon>Chlorobiia</taxon>
        <taxon>Chlorobiales</taxon>
        <taxon>Chlorobiaceae</taxon>
        <taxon>Chlorobium/Pelodictyon group</taxon>
        <taxon>Chlorobium</taxon>
    </lineage>
</organism>
<proteinExistence type="inferred from homology"/>